<feature type="peptide" id="PRO_0000440233" description="Chassatide C10" evidence="2">
    <location>
        <begin position="1"/>
        <end position="29"/>
    </location>
</feature>
<feature type="disulfide bond" evidence="1">
    <location>
        <begin position="4"/>
        <end position="18"/>
    </location>
</feature>
<feature type="disulfide bond" evidence="1">
    <location>
        <begin position="8"/>
        <end position="20"/>
    </location>
</feature>
<feature type="disulfide bond" evidence="1">
    <location>
        <begin position="13"/>
        <end position="25"/>
    </location>
</feature>
<feature type="cross-link" description="Cyclopeptide (Gly-Asn)" evidence="2">
    <location>
        <begin position="1"/>
        <end position="29"/>
    </location>
</feature>
<comment type="function">
    <text evidence="1 2">Probably participates in a plant defense mechanism (Probable). Has no activity against bacteria up to a concentration of 80 uM (PubMed:22467870). Has cytotoxic but no hemolytic activity (PubMed:22467870).</text>
</comment>
<comment type="domain">
    <text evidence="4">The presence of a 'disulfide through disulfide knot' structurally defines this protein as a knottin.</text>
</comment>
<comment type="PTM">
    <text evidence="1 2">This is a cyclic peptide.</text>
</comment>
<comment type="mass spectrometry" mass="3211.0" method="MALDI" evidence="2"/>
<comment type="similarity">
    <text evidence="1">Belongs to the cyclotide family. Bracelet subfamily.</text>
</comment>
<comment type="caution">
    <text evidence="4">This peptide is cyclic. The start position was chosen by similarity to chassatide C4 for which the DNA sequence is known.</text>
</comment>
<sequence length="29" mass="3238">GEYCGESCYLIPCFTPGCYCVSRQCVNKN</sequence>
<evidence type="ECO:0000255" key="1">
    <source>
        <dbReference type="PROSITE-ProRule" id="PRU00395"/>
    </source>
</evidence>
<evidence type="ECO:0000269" key="2">
    <source>
    </source>
</evidence>
<evidence type="ECO:0000303" key="3">
    <source>
    </source>
</evidence>
<evidence type="ECO:0000305" key="4"/>
<accession>C0HKH7</accession>
<keyword id="KW-0903">Direct protein sequencing</keyword>
<keyword id="KW-1015">Disulfide bond</keyword>
<keyword id="KW-0960">Knottin</keyword>
<keyword id="KW-0611">Plant defense</keyword>
<name>CYC10_CHACT</name>
<protein>
    <recommendedName>
        <fullName evidence="3">Chassatide C10</fullName>
    </recommendedName>
    <alternativeName>
        <fullName evidence="3">Cyclotide chaC10</fullName>
    </alternativeName>
</protein>
<proteinExistence type="evidence at protein level"/>
<reference evidence="4" key="1">
    <citation type="journal article" date="2012" name="J. Biol. Chem.">
        <title>Novel Cyclotides and Uncyclotides with Highly Shortened Precursors from Chassalia chartacea and Effects of Methionine Oxidation on Bioactivities.</title>
        <authorList>
            <person name="Nguyen G.K."/>
            <person name="Lim W.H."/>
            <person name="Nguyen P.Q."/>
            <person name="Tam J.P."/>
        </authorList>
    </citation>
    <scope>PROTEIN SEQUENCE</scope>
    <scope>FUNCTION</scope>
    <scope>MASS SPECTROMETRY</scope>
    <scope>IDENTIFICATION BY MASS SPECTROMETRY</scope>
</reference>
<dbReference type="SMR" id="C0HKH7"/>
<dbReference type="GO" id="GO:0006952">
    <property type="term" value="P:defense response"/>
    <property type="evidence" value="ECO:0007669"/>
    <property type="project" value="UniProtKB-KW"/>
</dbReference>
<dbReference type="InterPro" id="IPR005535">
    <property type="entry name" value="Cyclotide"/>
</dbReference>
<dbReference type="InterPro" id="IPR036146">
    <property type="entry name" value="Cyclotide_sf"/>
</dbReference>
<dbReference type="Pfam" id="PF03784">
    <property type="entry name" value="Cyclotide"/>
    <property type="match status" value="1"/>
</dbReference>
<dbReference type="SUPFAM" id="SSF57038">
    <property type="entry name" value="Cyclotides"/>
    <property type="match status" value="1"/>
</dbReference>
<organism evidence="3">
    <name type="scientific">Chassalia chartacea</name>
    <name type="common">Chassalia curviflora</name>
    <dbReference type="NCBI Taxonomy" id="510798"/>
    <lineage>
        <taxon>Eukaryota</taxon>
        <taxon>Viridiplantae</taxon>
        <taxon>Streptophyta</taxon>
        <taxon>Embryophyta</taxon>
        <taxon>Tracheophyta</taxon>
        <taxon>Spermatophyta</taxon>
        <taxon>Magnoliopsida</taxon>
        <taxon>eudicotyledons</taxon>
        <taxon>Gunneridae</taxon>
        <taxon>Pentapetalae</taxon>
        <taxon>asterids</taxon>
        <taxon>lamiids</taxon>
        <taxon>Gentianales</taxon>
        <taxon>Rubiaceae</taxon>
        <taxon>Rubioideae</taxon>
        <taxon>Palicoureeae</taxon>
        <taxon>Chassalia</taxon>
    </lineage>
</organism>